<sequence length="530" mass="56995">MSQLDTTTPSGDYLMALDAGTGSVRAVIFDLNGNQIAAGQAEWLHLPVPDVPGSMEFDLTTNWQLTCQCIRQALHLAKLPASAIRAVAACSMREGIVLYDRSGTPIWACANVDARASREVSELKELHNNGFELEVYQCSGQTLALSAMPRLLWLAHYRPDIYRQAGTLTMISDWLANMLSGELAVDPSNAGTTGMLDLVTRNWQPNLLEMAGLRADILSPVKETGTLLGHVTAKAAQECGLLAGTPVVMGGGDVQLGCLGLGVVHAGQTAVLGGTFWQQVVNLPQPIIDPNMNTRINPHVIPGMVQAESISFFTGLTMRWFRDAFCAEEKLLAQRLGIDTYSLLEDMAARVPAGAYGVMPIFSDVMRFKSWYHAAPSFINLSLDPEKCNKATLFRALEENAAIVSACNLAQIAEFSGVKASSVVFAGGGAKGKLWSQILADVTGVPVKVPVVKEATALGCAIAAGVGVGLYEALDKTGERLVRWEREYIPNTEHKALYQAAKTNWQAVYTDQLGLVDCGLTTSLWKAPGL</sequence>
<gene>
    <name evidence="1" type="primary">lsrK</name>
    <name type="ordered locus">YPDSF_3216</name>
</gene>
<organism>
    <name type="scientific">Yersinia pestis (strain Pestoides F)</name>
    <dbReference type="NCBI Taxonomy" id="386656"/>
    <lineage>
        <taxon>Bacteria</taxon>
        <taxon>Pseudomonadati</taxon>
        <taxon>Pseudomonadota</taxon>
        <taxon>Gammaproteobacteria</taxon>
        <taxon>Enterobacterales</taxon>
        <taxon>Yersiniaceae</taxon>
        <taxon>Yersinia</taxon>
    </lineage>
</organism>
<accession>A4TQL2</accession>
<reference key="1">
    <citation type="submission" date="2007-02" db="EMBL/GenBank/DDBJ databases">
        <title>Complete sequence of chromosome of Yersinia pestis Pestoides F.</title>
        <authorList>
            <consortium name="US DOE Joint Genome Institute"/>
            <person name="Copeland A."/>
            <person name="Lucas S."/>
            <person name="Lapidus A."/>
            <person name="Barry K."/>
            <person name="Detter J.C."/>
            <person name="Glavina del Rio T."/>
            <person name="Hammon N."/>
            <person name="Israni S."/>
            <person name="Dalin E."/>
            <person name="Tice H."/>
            <person name="Pitluck S."/>
            <person name="Di Bartolo G."/>
            <person name="Chain P."/>
            <person name="Malfatti S."/>
            <person name="Shin M."/>
            <person name="Vergez L."/>
            <person name="Schmutz J."/>
            <person name="Larimer F."/>
            <person name="Land M."/>
            <person name="Hauser L."/>
            <person name="Worsham P."/>
            <person name="Chu M."/>
            <person name="Bearden S."/>
            <person name="Garcia E."/>
            <person name="Richardson P."/>
        </authorList>
    </citation>
    <scope>NUCLEOTIDE SEQUENCE [LARGE SCALE GENOMIC DNA]</scope>
    <source>
        <strain>Pestoides F</strain>
    </source>
</reference>
<name>LSRK_YERPP</name>
<protein>
    <recommendedName>
        <fullName evidence="1">Autoinducer-2 kinase</fullName>
        <shortName evidence="1">AI-2 kinase</shortName>
        <ecNumber evidence="1">2.7.1.189</ecNumber>
    </recommendedName>
</protein>
<comment type="function">
    <text evidence="1">Catalyzes the phosphorylation of autoinducer-2 (AI-2) to phospho-AI-2, which subsequently inactivates the transcriptional regulator LsrR and leads to the transcription of the lsr operon. Phosphorylates the ring-open form of (S)-4,5-dihydroxypentane-2,3-dione (DPD), which is the precursor to all AI-2 signaling molecules, at the C5 position.</text>
</comment>
<comment type="catalytic activity">
    <reaction evidence="1">
        <text>(S)-4,5-dihydroxypentane-2,3-dione + ATP = (2S)-2-hydroxy-3,4-dioxopentyl phosphate + ADP + H(+)</text>
        <dbReference type="Rhea" id="RHEA:15377"/>
        <dbReference type="ChEBI" id="CHEBI:15378"/>
        <dbReference type="ChEBI" id="CHEBI:29484"/>
        <dbReference type="ChEBI" id="CHEBI:30616"/>
        <dbReference type="ChEBI" id="CHEBI:71677"/>
        <dbReference type="ChEBI" id="CHEBI:456216"/>
        <dbReference type="EC" id="2.7.1.189"/>
    </reaction>
</comment>
<comment type="subcellular location">
    <subcellularLocation>
        <location evidence="1">Cytoplasm</location>
    </subcellularLocation>
</comment>
<comment type="similarity">
    <text evidence="1">Belongs to the FGGY kinase family.</text>
</comment>
<dbReference type="EC" id="2.7.1.189" evidence="1"/>
<dbReference type="EMBL" id="CP000668">
    <property type="protein sequence ID" value="ABP41574.1"/>
    <property type="molecule type" value="Genomic_DNA"/>
</dbReference>
<dbReference type="RefSeq" id="WP_002230543.1">
    <property type="nucleotide sequence ID" value="NZ_CP009715.1"/>
</dbReference>
<dbReference type="SMR" id="A4TQL2"/>
<dbReference type="GeneID" id="96664058"/>
<dbReference type="KEGG" id="ypp:YPDSF_3216"/>
<dbReference type="PATRIC" id="fig|386656.14.peg.1127"/>
<dbReference type="GO" id="GO:0005737">
    <property type="term" value="C:cytoplasm"/>
    <property type="evidence" value="ECO:0007669"/>
    <property type="project" value="UniProtKB-SubCell"/>
</dbReference>
<dbReference type="GO" id="GO:0071518">
    <property type="term" value="F:autoinducer-2 kinase activity"/>
    <property type="evidence" value="ECO:0007669"/>
    <property type="project" value="UniProtKB-UniRule"/>
</dbReference>
<dbReference type="GO" id="GO:0005975">
    <property type="term" value="P:carbohydrate metabolic process"/>
    <property type="evidence" value="ECO:0007669"/>
    <property type="project" value="InterPro"/>
</dbReference>
<dbReference type="GO" id="GO:0009372">
    <property type="term" value="P:quorum sensing"/>
    <property type="evidence" value="ECO:0007669"/>
    <property type="project" value="InterPro"/>
</dbReference>
<dbReference type="CDD" id="cd07775">
    <property type="entry name" value="ASKHA_NBD_FGGY_AI-2K"/>
    <property type="match status" value="1"/>
</dbReference>
<dbReference type="Gene3D" id="3.30.420.40">
    <property type="match status" value="2"/>
</dbReference>
<dbReference type="HAMAP" id="MF_02053">
    <property type="entry name" value="LsrK"/>
    <property type="match status" value="1"/>
</dbReference>
<dbReference type="InterPro" id="IPR033676">
    <property type="entry name" value="AI-2_kinase"/>
</dbReference>
<dbReference type="InterPro" id="IPR043129">
    <property type="entry name" value="ATPase_NBD"/>
</dbReference>
<dbReference type="InterPro" id="IPR000577">
    <property type="entry name" value="Carb_kinase_FGGY"/>
</dbReference>
<dbReference type="InterPro" id="IPR018485">
    <property type="entry name" value="FGGY_C"/>
</dbReference>
<dbReference type="InterPro" id="IPR050406">
    <property type="entry name" value="FGGY_Carb_Kinase"/>
</dbReference>
<dbReference type="InterPro" id="IPR018484">
    <property type="entry name" value="FGGY_N"/>
</dbReference>
<dbReference type="NCBIfam" id="NF008187">
    <property type="entry name" value="PRK10939.1"/>
    <property type="match status" value="1"/>
</dbReference>
<dbReference type="PANTHER" id="PTHR43095:SF1">
    <property type="entry name" value="AUTOINDUCER-2 KINASE"/>
    <property type="match status" value="1"/>
</dbReference>
<dbReference type="PANTHER" id="PTHR43095">
    <property type="entry name" value="SUGAR KINASE"/>
    <property type="match status" value="1"/>
</dbReference>
<dbReference type="Pfam" id="PF02782">
    <property type="entry name" value="FGGY_C"/>
    <property type="match status" value="1"/>
</dbReference>
<dbReference type="Pfam" id="PF00370">
    <property type="entry name" value="FGGY_N"/>
    <property type="match status" value="1"/>
</dbReference>
<dbReference type="PIRSF" id="PIRSF000538">
    <property type="entry name" value="GlpK"/>
    <property type="match status" value="1"/>
</dbReference>
<dbReference type="SUPFAM" id="SSF53067">
    <property type="entry name" value="Actin-like ATPase domain"/>
    <property type="match status" value="2"/>
</dbReference>
<keyword id="KW-0963">Cytoplasm</keyword>
<keyword id="KW-0418">Kinase</keyword>
<keyword id="KW-0808">Transferase</keyword>
<proteinExistence type="inferred from homology"/>
<evidence type="ECO:0000255" key="1">
    <source>
        <dbReference type="HAMAP-Rule" id="MF_02053"/>
    </source>
</evidence>
<feature type="chain" id="PRO_0000351602" description="Autoinducer-2 kinase">
    <location>
        <begin position="1"/>
        <end position="530"/>
    </location>
</feature>